<accession>Q96247</accession>
<organism>
    <name type="scientific">Arabidopsis thaliana</name>
    <name type="common">Mouse-ear cress</name>
    <dbReference type="NCBI Taxonomy" id="3702"/>
    <lineage>
        <taxon>Eukaryota</taxon>
        <taxon>Viridiplantae</taxon>
        <taxon>Streptophyta</taxon>
        <taxon>Embryophyta</taxon>
        <taxon>Tracheophyta</taxon>
        <taxon>Spermatophyta</taxon>
        <taxon>Magnoliopsida</taxon>
        <taxon>eudicotyledons</taxon>
        <taxon>Gunneridae</taxon>
        <taxon>Pentapetalae</taxon>
        <taxon>rosids</taxon>
        <taxon>malvids</taxon>
        <taxon>Brassicales</taxon>
        <taxon>Brassicaceae</taxon>
        <taxon>Camelineae</taxon>
        <taxon>Arabidopsis</taxon>
    </lineage>
</organism>
<gene>
    <name type="primary">AUX1</name>
    <name type="synonym">AUX</name>
    <name type="synonym">PIR1</name>
    <name type="synonym">WAV5</name>
    <name type="ordered locus">At2g38120</name>
    <name type="ORF">F16M14.5</name>
</gene>
<keyword id="KW-0029">Amino-acid transport</keyword>
<keyword id="KW-0927">Auxin signaling pathway</keyword>
<keyword id="KW-1003">Cell membrane</keyword>
<keyword id="KW-0472">Membrane</keyword>
<keyword id="KW-1185">Reference proteome</keyword>
<keyword id="KW-0769">Symport</keyword>
<keyword id="KW-0812">Transmembrane</keyword>
<keyword id="KW-1133">Transmembrane helix</keyword>
<keyword id="KW-0813">Transport</keyword>
<evidence type="ECO:0000255" key="1"/>
<evidence type="ECO:0000256" key="2">
    <source>
        <dbReference type="SAM" id="MobiDB-lite"/>
    </source>
</evidence>
<evidence type="ECO:0000269" key="3">
    <source>
    </source>
</evidence>
<evidence type="ECO:0000269" key="4">
    <source>
    </source>
</evidence>
<evidence type="ECO:0000269" key="5">
    <source>
    </source>
</evidence>
<evidence type="ECO:0000269" key="6">
    <source>
    </source>
</evidence>
<evidence type="ECO:0000269" key="7">
    <source>
    </source>
</evidence>
<evidence type="ECO:0000269" key="8">
    <source>
    </source>
</evidence>
<evidence type="ECO:0000269" key="9">
    <source>
    </source>
</evidence>
<evidence type="ECO:0000269" key="10">
    <source>
    </source>
</evidence>
<evidence type="ECO:0000269" key="11">
    <source>
    </source>
</evidence>
<evidence type="ECO:0000269" key="12">
    <source>
    </source>
</evidence>
<evidence type="ECO:0000269" key="13">
    <source>
    </source>
</evidence>
<evidence type="ECO:0000269" key="14">
    <source>
    </source>
</evidence>
<evidence type="ECO:0000269" key="15">
    <source>
    </source>
</evidence>
<evidence type="ECO:0000269" key="16">
    <source>
    </source>
</evidence>
<evidence type="ECO:0000269" key="17">
    <source>
    </source>
</evidence>
<evidence type="ECO:0000269" key="18">
    <source>
    </source>
</evidence>
<evidence type="ECO:0000269" key="19">
    <source>
    </source>
</evidence>
<evidence type="ECO:0000269" key="20">
    <source>
    </source>
</evidence>
<evidence type="ECO:0000269" key="21">
    <source ref="10"/>
</evidence>
<evidence type="ECO:0000269" key="22">
    <source ref="18"/>
</evidence>
<evidence type="ECO:0000269" key="23">
    <source ref="6"/>
</evidence>
<evidence type="ECO:0000269" key="24">
    <source ref="8"/>
</evidence>
<evidence type="ECO:0000305" key="25"/>
<name>AUX1_ARATH</name>
<comment type="function">
    <text evidence="3 4 6 7 8 9 10 11 12 13 14 15 16 17 18 19 20 21 22 23 24">Carrier protein involved in proton-driven auxin influx. Mediates the formation of auxin gradient from developing leaves (site of auxin biosynthesis) to tips by contributing to the loading of auxin in vascular tissues and facilitating acropetal (base to tip) auxin transport within inner tissues of the root apex, and basipetal (tip to base) auxin transport within outer tissues of the root apex. Unloads auxin from the mature phloem to deliver the hormone to the root meristem via the protophloem cell files. Coordinated subcellular localization of AUX1 is regulated by a brefeldin A-sensitive (BFA) vesicle trafficking process. Involved in lateral root formation, trichoblast polarization and root hair elongation. Required for gravitropism and thigmotropism, especially in roots, by modulating responses to auxin, ethylene and cytokinins such as benzyladenine (BA). Needed for ammonium-mediated root-growth inhibition. Confers sensitivity to the herbicide 2,4-dichlorophenoxyacetic acid (2,4-D, auxin analog), and to polar auxin transport inhibitors such as N-1-naphthylphthalamic acid (NPA) and 2,3,5-triiodobenzoic acid (TIBA).</text>
</comment>
<comment type="activity regulation">
    <text evidence="5 6">Auxin uptake mediated by AUX1 is inhibited by chromosaponin-1 (CSI), 1-naphthoxyacetic acid (1-NOA) and 3-chloro-4-hydroxyphenylacetic acid (CHPAA).</text>
</comment>
<comment type="interaction">
    <interactant intactId="EBI-16935343">
        <id>Q96247</id>
    </interactant>
    <interactant intactId="EBI-25514394">
        <id>Q9FZ33</id>
        <label>AXR4</label>
    </interactant>
    <organismsDiffer>false</organismsDiffer>
    <experiments>5</experiments>
</comment>
<comment type="subcellular location">
    <subcellularLocation>
        <location evidence="9 10 13">Cell membrane</location>
        <topology evidence="9 10 13">Multi-pass membrane protein</topology>
    </subcellularLocation>
    <text>In S2 columella cells, a dynamic cytoplasmic to membrane localization seems to occur during early stage of gravity signal transduction. In roots protophloem cells, asymmetric repartition in the upper plasma membrane.</text>
</comment>
<comment type="tissue specificity">
    <text evidence="4 9 17">Expressed in root and shoot apical tissues. In root apex, confined to stele initials, protophloem poles, statolith-containing S2 columella cells, lateral root cap cells (LRC), and in epidermal cells from the distal elongation zone (DEZ) up to central elongation zone (CEZ).</text>
</comment>
<comment type="developmental stage">
    <text evidence="11">In seedlings, first expressed in primary root, followed by shoot apical meristem and then in lateral roots. During lateral root formation, expression in primordia starts at a late phase of stage I, before the first periclinal division. In later stages II and III, localized in the apical tip, extending to the elongation zone, and in the vascular cylinder extending to the junction with the primary root.</text>
</comment>
<comment type="similarity">
    <text evidence="25">Belongs to the amino acid/polyamine transporter 2 family. Amino acid/auxin permease (AAAP) (TC 2.A.18.1) subfamily.</text>
</comment>
<sequence>MSEGVEAIVANDNGTDQVNGNRTGKDNEEHDGSTGSNLSNFLWHGGSVWDAWFSCASNQVAQVLLTLPYSFSQLGMLSGIVLQIFYGLLGSWTAYLISVLYVEYRARKEKEGKSFKNHVIQWFEVLDGLLGSYWKALGLAFNCTFLLFGSVIQLIACASNIYYINDHLDKRTWTYIFGACCATTVFIPSFHNYRIWSFLGLGMTTYTAWYLAIASIIHGQAEGVKHSGPTKLVLYFTGATNILYTFGGHAVTVEIMHAMWKPQKFKYIYLMATLYVFTLTIPSAAAVYWAFGDALLDHSNAFSLMPKNAWRDAAVILMLIHQFITFGFACTPLYFVWEKVIGMHDTKSICLRALARLPVVIPIWFLAIIFPFFGPINSAVGALLVSFTVYIIPSLAHMLTYRSASARQNAAEKPPFFMPSWTAMYVLNAFVVVWVLIVGFGFGGWASVTNFVRQVDTFGLFAKCYQCKPAAAAAHAPVSALHHRL</sequence>
<protein>
    <recommendedName>
        <fullName>Auxin transporter protein 1</fullName>
    </recommendedName>
    <alternativeName>
        <fullName>Auxin influx carrier protein 1</fullName>
    </alternativeName>
    <alternativeName>
        <fullName>Polar auxin transport inhibitor-resistant protein 1</fullName>
    </alternativeName>
</protein>
<proteinExistence type="evidence at protein level"/>
<feature type="chain" id="PRO_0000093841" description="Auxin transporter protein 1">
    <location>
        <begin position="1"/>
        <end position="485"/>
    </location>
</feature>
<feature type="topological domain" description="Cytoplasmic" evidence="1">
    <location>
        <begin position="1"/>
        <end position="59"/>
    </location>
</feature>
<feature type="transmembrane region" description="Helical" evidence="1">
    <location>
        <begin position="60"/>
        <end position="77"/>
    </location>
</feature>
<feature type="topological domain" description="Extracellular" evidence="1">
    <location>
        <begin position="78"/>
        <end position="79"/>
    </location>
</feature>
<feature type="transmembrane region" description="Helical" evidence="1">
    <location>
        <begin position="80"/>
        <end position="100"/>
    </location>
</feature>
<feature type="topological domain" description="Cytoplasmic" evidence="1">
    <location>
        <begin position="101"/>
        <end position="135"/>
    </location>
</feature>
<feature type="transmembrane region" description="Helical" evidence="1">
    <location>
        <begin position="136"/>
        <end position="156"/>
    </location>
</feature>
<feature type="topological domain" description="Extracellular" evidence="1">
    <location>
        <begin position="157"/>
        <end position="172"/>
    </location>
</feature>
<feature type="transmembrane region" description="Helical" evidence="1">
    <location>
        <begin position="173"/>
        <end position="193"/>
    </location>
</feature>
<feature type="topological domain" description="Cytoplasmic" evidence="1">
    <location>
        <begin position="194"/>
        <end position="196"/>
    </location>
</feature>
<feature type="transmembrane region" description="Helical" evidence="1">
    <location>
        <begin position="197"/>
        <end position="217"/>
    </location>
</feature>
<feature type="topological domain" description="Extracellular" evidence="1">
    <location>
        <begin position="218"/>
        <end position="232"/>
    </location>
</feature>
<feature type="transmembrane region" description="Helical" evidence="1">
    <location>
        <begin position="233"/>
        <end position="253"/>
    </location>
</feature>
<feature type="topological domain" description="Cytoplasmic" evidence="1">
    <location>
        <begin position="254"/>
        <end position="266"/>
    </location>
</feature>
<feature type="transmembrane region" description="Helical" evidence="1">
    <location>
        <begin position="267"/>
        <end position="287"/>
    </location>
</feature>
<feature type="topological domain" description="Extracellular" evidence="1">
    <location>
        <begin position="288"/>
        <end position="314"/>
    </location>
</feature>
<feature type="transmembrane region" description="Helical" evidence="1">
    <location>
        <begin position="315"/>
        <end position="335"/>
    </location>
</feature>
<feature type="topological domain" description="Cytoplasmic" evidence="1">
    <location>
        <begin position="336"/>
        <end position="356"/>
    </location>
</feature>
<feature type="transmembrane region" description="Helical" evidence="1">
    <location>
        <begin position="357"/>
        <end position="377"/>
    </location>
</feature>
<feature type="topological domain" description="Extracellular" evidence="1">
    <location>
        <position position="378"/>
    </location>
</feature>
<feature type="transmembrane region" description="Helical" evidence="1">
    <location>
        <begin position="379"/>
        <end position="399"/>
    </location>
</feature>
<feature type="topological domain" description="Cytoplasmic" evidence="1">
    <location>
        <begin position="400"/>
        <end position="425"/>
    </location>
</feature>
<feature type="transmembrane region" description="Helical" evidence="1">
    <location>
        <begin position="426"/>
        <end position="446"/>
    </location>
</feature>
<feature type="topological domain" description="Extracellular" evidence="1">
    <location>
        <begin position="447"/>
        <end position="485"/>
    </location>
</feature>
<feature type="region of interest" description="Disordered" evidence="2">
    <location>
        <begin position="12"/>
        <end position="33"/>
    </location>
</feature>
<feature type="compositionally biased region" description="Polar residues" evidence="2">
    <location>
        <begin position="12"/>
        <end position="22"/>
    </location>
</feature>
<feature type="compositionally biased region" description="Basic and acidic residues" evidence="2">
    <location>
        <begin position="23"/>
        <end position="32"/>
    </location>
</feature>
<feature type="mutagenesis site" description="In aux1-120; agravitropism." evidence="13">
    <original>S</original>
    <variation>F</variation>
    <location>
        <position position="57"/>
    </location>
</feature>
<feature type="mutagenesis site" description="In aux1-110; resistance to 2,4-D." evidence="19">
    <original>G</original>
    <variation>R</variation>
    <location>
        <position position="79"/>
    </location>
</feature>
<feature type="mutagenesis site" description="In aux1-112; agravitropism." evidence="13">
    <original>G</original>
    <variation>D</variation>
    <location>
        <position position="178"/>
    </location>
</feature>
<feature type="mutagenesis site" description="In aux1-111; agravitropism." evidence="13">
    <original>S</original>
    <variation>F</variation>
    <location>
        <position position="215"/>
    </location>
</feature>
<feature type="mutagenesis site" description="In aux1-104; agravitropism." evidence="13">
    <original>G</original>
    <variation>E</variation>
    <location>
        <position position="238"/>
    </location>
</feature>
<feature type="mutagenesis site" description="In aux1-106; resistance to 2,4-D, agravitropism." evidence="19">
    <original>G</original>
    <variation>E</variation>
    <location>
        <position position="247"/>
    </location>
</feature>
<feature type="mutagenesis site" description="In aux1-113; partial agravitropism." evidence="13">
    <original>A</original>
    <variation>T</variation>
    <location>
        <position position="250"/>
    </location>
</feature>
<feature type="mutagenesis site" description="In aux1-114; partial agravitropism." evidence="13">
    <original>M</original>
    <variation>I</variation>
    <location>
        <position position="259"/>
    </location>
</feature>
<feature type="mutagenesis site" description="In aux1-116; partial agravitropism." evidence="13">
    <original>P</original>
    <variation>S</variation>
    <location>
        <position position="262"/>
    </location>
</feature>
<feature type="mutagenesis site" description="In aux1-2; resistance to 2,4-D, lower growth rate of roots and hypocotyls, partial gravitropism." evidence="19">
    <original>A</original>
    <variation>V</variation>
    <location>
        <position position="272"/>
    </location>
</feature>
<feature type="mutagenesis site" description="In aux1-117; agravitropism." evidence="13">
    <original>G</original>
    <variation>E</variation>
    <location>
        <position position="292"/>
    </location>
</feature>
<feature type="mutagenesis site" description="In aux1-102; agravitropism." evidence="13">
    <original>M</original>
    <variation>R</variation>
    <location>
        <position position="305"/>
    </location>
</feature>
<feature type="mutagenesis site" description="In aux1-103; agravitropism." evidence="13">
    <original>T</original>
    <variation>M</variation>
    <location>
        <position position="325"/>
    </location>
</feature>
<feature type="mutagenesis site" description="In aux1-118; agravitropism." evidence="13">
    <original>S</original>
    <variation>N</variation>
    <location>
        <position position="386"/>
    </location>
</feature>
<feature type="mutagenesis site" description="In aux1-105; agravitropism." evidence="13">
    <original>G</original>
    <variation>R</variation>
    <location>
        <position position="439"/>
    </location>
</feature>
<feature type="mutagenesis site" description="In aux1-7; agravitropism, resistance to ethylene, auxin and 2,4-D." evidence="17">
    <original>G</original>
    <variation>D</variation>
    <location>
        <position position="459"/>
    </location>
</feature>
<dbReference type="EMBL" id="X98772">
    <property type="protein sequence ID" value="CAA67308.1"/>
    <property type="molecule type" value="Genomic_DNA"/>
</dbReference>
<dbReference type="EMBL" id="AC003028">
    <property type="protein sequence ID" value="AAC27161.1"/>
    <property type="molecule type" value="Genomic_DNA"/>
</dbReference>
<dbReference type="EMBL" id="CP002685">
    <property type="protein sequence ID" value="AEC09491.1"/>
    <property type="molecule type" value="Genomic_DNA"/>
</dbReference>
<dbReference type="EMBL" id="AY054488">
    <property type="protein sequence ID" value="AAK96679.1"/>
    <property type="molecule type" value="mRNA"/>
</dbReference>
<dbReference type="EMBL" id="AY093300">
    <property type="protein sequence ID" value="AAM13299.1"/>
    <property type="molecule type" value="mRNA"/>
</dbReference>
<dbReference type="EMBL" id="AY087092">
    <property type="protein sequence ID" value="AAM64652.1"/>
    <property type="molecule type" value="mRNA"/>
</dbReference>
<dbReference type="PIR" id="T01244">
    <property type="entry name" value="T01244"/>
</dbReference>
<dbReference type="RefSeq" id="NP_565882.1">
    <property type="nucleotide sequence ID" value="NM_129368.3"/>
</dbReference>
<dbReference type="SMR" id="Q96247"/>
<dbReference type="BioGRID" id="3734">
    <property type="interactions" value="39"/>
</dbReference>
<dbReference type="FunCoup" id="Q96247">
    <property type="interactions" value="312"/>
</dbReference>
<dbReference type="IntAct" id="Q96247">
    <property type="interactions" value="36"/>
</dbReference>
<dbReference type="STRING" id="3702.Q96247"/>
<dbReference type="TCDB" id="2.A.18.1.1">
    <property type="family name" value="the amino acid/auxin permease (aaap) family"/>
</dbReference>
<dbReference type="PaxDb" id="3702-AT2G38120.1"/>
<dbReference type="ProteomicsDB" id="240930"/>
<dbReference type="EnsemblPlants" id="AT2G38120.1">
    <property type="protein sequence ID" value="AT2G38120.1"/>
    <property type="gene ID" value="AT2G38120"/>
</dbReference>
<dbReference type="GeneID" id="818390"/>
<dbReference type="Gramene" id="AT2G38120.1">
    <property type="protein sequence ID" value="AT2G38120.1"/>
    <property type="gene ID" value="AT2G38120"/>
</dbReference>
<dbReference type="KEGG" id="ath:AT2G38120"/>
<dbReference type="Araport" id="AT2G38120"/>
<dbReference type="TAIR" id="AT2G38120">
    <property type="gene designation" value="AUX1"/>
</dbReference>
<dbReference type="eggNOG" id="KOG1303">
    <property type="taxonomic scope" value="Eukaryota"/>
</dbReference>
<dbReference type="HOGENOM" id="CLU_027994_2_0_1"/>
<dbReference type="InParanoid" id="Q96247"/>
<dbReference type="OMA" id="ARKFWII"/>
<dbReference type="OrthoDB" id="40134at2759"/>
<dbReference type="PhylomeDB" id="Q96247"/>
<dbReference type="PRO" id="PR:Q96247"/>
<dbReference type="Proteomes" id="UP000006548">
    <property type="component" value="Chromosome 2"/>
</dbReference>
<dbReference type="ExpressionAtlas" id="Q96247">
    <property type="expression patterns" value="baseline and differential"/>
</dbReference>
<dbReference type="GO" id="GO:0009986">
    <property type="term" value="C:cell surface"/>
    <property type="evidence" value="ECO:0000314"/>
    <property type="project" value="TAIR"/>
</dbReference>
<dbReference type="GO" id="GO:0005768">
    <property type="term" value="C:endosome"/>
    <property type="evidence" value="ECO:0000314"/>
    <property type="project" value="TAIR"/>
</dbReference>
<dbReference type="GO" id="GO:0005794">
    <property type="term" value="C:Golgi apparatus"/>
    <property type="evidence" value="ECO:0000314"/>
    <property type="project" value="TAIR"/>
</dbReference>
<dbReference type="GO" id="GO:0005886">
    <property type="term" value="C:plasma membrane"/>
    <property type="evidence" value="ECO:0000314"/>
    <property type="project" value="TAIR"/>
</dbReference>
<dbReference type="GO" id="GO:0015171">
    <property type="term" value="F:amino acid transmembrane transporter activity"/>
    <property type="evidence" value="ECO:0000250"/>
    <property type="project" value="TAIR"/>
</dbReference>
<dbReference type="GO" id="GO:0010011">
    <property type="term" value="F:auxin binding"/>
    <property type="evidence" value="ECO:0000314"/>
    <property type="project" value="TAIR"/>
</dbReference>
<dbReference type="GO" id="GO:0010328">
    <property type="term" value="F:auxin influx transmembrane transporter activity"/>
    <property type="evidence" value="ECO:0000314"/>
    <property type="project" value="TAIR"/>
</dbReference>
<dbReference type="GO" id="GO:0015293">
    <property type="term" value="F:symporter activity"/>
    <property type="evidence" value="ECO:0007669"/>
    <property type="project" value="UniProtKB-KW"/>
</dbReference>
<dbReference type="GO" id="GO:0009926">
    <property type="term" value="P:auxin polar transport"/>
    <property type="evidence" value="ECO:0000304"/>
    <property type="project" value="TAIR"/>
</dbReference>
<dbReference type="GO" id="GO:0009734">
    <property type="term" value="P:auxin-activated signaling pathway"/>
    <property type="evidence" value="ECO:0007669"/>
    <property type="project" value="UniProtKB-KW"/>
</dbReference>
<dbReference type="GO" id="GO:0001736">
    <property type="term" value="P:establishment of planar polarity"/>
    <property type="evidence" value="ECO:0000316"/>
    <property type="project" value="TAIR"/>
</dbReference>
<dbReference type="GO" id="GO:0010311">
    <property type="term" value="P:lateral root formation"/>
    <property type="evidence" value="ECO:0000315"/>
    <property type="project" value="TAIR"/>
</dbReference>
<dbReference type="GO" id="GO:0009958">
    <property type="term" value="P:positive gravitropism"/>
    <property type="evidence" value="ECO:0000315"/>
    <property type="project" value="TAIR"/>
</dbReference>
<dbReference type="GO" id="GO:0009624">
    <property type="term" value="P:response to nematode"/>
    <property type="evidence" value="ECO:0007007"/>
    <property type="project" value="TAIR"/>
</dbReference>
<dbReference type="GO" id="GO:0048829">
    <property type="term" value="P:root cap development"/>
    <property type="evidence" value="ECO:0000315"/>
    <property type="project" value="TAIR"/>
</dbReference>
<dbReference type="GO" id="GO:0048765">
    <property type="term" value="P:root hair cell differentiation"/>
    <property type="evidence" value="ECO:0000316"/>
    <property type="project" value="TAIR"/>
</dbReference>
<dbReference type="InterPro" id="IPR013057">
    <property type="entry name" value="AA_transpt_TM"/>
</dbReference>
<dbReference type="PANTHER" id="PTHR48017">
    <property type="entry name" value="OS05G0424000 PROTEIN-RELATED"/>
    <property type="match status" value="1"/>
</dbReference>
<dbReference type="Pfam" id="PF01490">
    <property type="entry name" value="Aa_trans"/>
    <property type="match status" value="1"/>
</dbReference>
<reference key="1">
    <citation type="journal article" date="1996" name="Science">
        <title>Arabidopsis AUX1 gene: a permease-like regulator of root gravitropism.</title>
        <authorList>
            <person name="Bennett M.J."/>
            <person name="Marchant A."/>
            <person name="Green H.G."/>
            <person name="May S.T."/>
            <person name="Ward S.P."/>
            <person name="Millner P.A."/>
            <person name="Walker A.R."/>
            <person name="Schultz B."/>
            <person name="Feldmann K.A."/>
        </authorList>
    </citation>
    <scope>NUCLEOTIDE SEQUENCE [GENOMIC DNA]</scope>
    <scope>FUNCTION</scope>
    <scope>TISSUE SPECIFICITY</scope>
    <scope>MUTAGENESIS OF GLY-459</scope>
</reference>
<reference key="2">
    <citation type="journal article" date="1999" name="Nature">
        <title>Sequence and analysis of chromosome 2 of the plant Arabidopsis thaliana.</title>
        <authorList>
            <person name="Lin X."/>
            <person name="Kaul S."/>
            <person name="Rounsley S.D."/>
            <person name="Shea T.P."/>
            <person name="Benito M.-I."/>
            <person name="Town C.D."/>
            <person name="Fujii C.Y."/>
            <person name="Mason T.M."/>
            <person name="Bowman C.L."/>
            <person name="Barnstead M.E."/>
            <person name="Feldblyum T.V."/>
            <person name="Buell C.R."/>
            <person name="Ketchum K.A."/>
            <person name="Lee J.J."/>
            <person name="Ronning C.M."/>
            <person name="Koo H.L."/>
            <person name="Moffat K.S."/>
            <person name="Cronin L.A."/>
            <person name="Shen M."/>
            <person name="Pai G."/>
            <person name="Van Aken S."/>
            <person name="Umayam L."/>
            <person name="Tallon L.J."/>
            <person name="Gill J.E."/>
            <person name="Adams M.D."/>
            <person name="Carrera A.J."/>
            <person name="Creasy T.H."/>
            <person name="Goodman H.M."/>
            <person name="Somerville C.R."/>
            <person name="Copenhaver G.P."/>
            <person name="Preuss D."/>
            <person name="Nierman W.C."/>
            <person name="White O."/>
            <person name="Eisen J.A."/>
            <person name="Salzberg S.L."/>
            <person name="Fraser C.M."/>
            <person name="Venter J.C."/>
        </authorList>
    </citation>
    <scope>NUCLEOTIDE SEQUENCE [LARGE SCALE GENOMIC DNA]</scope>
    <source>
        <strain>cv. Columbia</strain>
    </source>
</reference>
<reference key="3">
    <citation type="journal article" date="2017" name="Plant J.">
        <title>Araport11: a complete reannotation of the Arabidopsis thaliana reference genome.</title>
        <authorList>
            <person name="Cheng C.Y."/>
            <person name="Krishnakumar V."/>
            <person name="Chan A.P."/>
            <person name="Thibaud-Nissen F."/>
            <person name="Schobel S."/>
            <person name="Town C.D."/>
        </authorList>
    </citation>
    <scope>GENOME REANNOTATION</scope>
    <source>
        <strain>cv. Columbia</strain>
    </source>
</reference>
<reference key="4">
    <citation type="journal article" date="2003" name="Science">
        <title>Empirical analysis of transcriptional activity in the Arabidopsis genome.</title>
        <authorList>
            <person name="Yamada K."/>
            <person name="Lim J."/>
            <person name="Dale J.M."/>
            <person name="Chen H."/>
            <person name="Shinn P."/>
            <person name="Palm C.J."/>
            <person name="Southwick A.M."/>
            <person name="Wu H.C."/>
            <person name="Kim C.J."/>
            <person name="Nguyen M."/>
            <person name="Pham P.K."/>
            <person name="Cheuk R.F."/>
            <person name="Karlin-Newmann G."/>
            <person name="Liu S.X."/>
            <person name="Lam B."/>
            <person name="Sakano H."/>
            <person name="Wu T."/>
            <person name="Yu G."/>
            <person name="Miranda M."/>
            <person name="Quach H.L."/>
            <person name="Tripp M."/>
            <person name="Chang C.H."/>
            <person name="Lee J.M."/>
            <person name="Toriumi M.J."/>
            <person name="Chan M.M."/>
            <person name="Tang C.C."/>
            <person name="Onodera C.S."/>
            <person name="Deng J.M."/>
            <person name="Akiyama K."/>
            <person name="Ansari Y."/>
            <person name="Arakawa T."/>
            <person name="Banh J."/>
            <person name="Banno F."/>
            <person name="Bowser L."/>
            <person name="Brooks S.Y."/>
            <person name="Carninci P."/>
            <person name="Chao Q."/>
            <person name="Choy N."/>
            <person name="Enju A."/>
            <person name="Goldsmith A.D."/>
            <person name="Gurjal M."/>
            <person name="Hansen N.F."/>
            <person name="Hayashizaki Y."/>
            <person name="Johnson-Hopson C."/>
            <person name="Hsuan V.W."/>
            <person name="Iida K."/>
            <person name="Karnes M."/>
            <person name="Khan S."/>
            <person name="Koesema E."/>
            <person name="Ishida J."/>
            <person name="Jiang P.X."/>
            <person name="Jones T."/>
            <person name="Kawai J."/>
            <person name="Kamiya A."/>
            <person name="Meyers C."/>
            <person name="Nakajima M."/>
            <person name="Narusaka M."/>
            <person name="Seki M."/>
            <person name="Sakurai T."/>
            <person name="Satou M."/>
            <person name="Tamse R."/>
            <person name="Vaysberg M."/>
            <person name="Wallender E.K."/>
            <person name="Wong C."/>
            <person name="Yamamura Y."/>
            <person name="Yuan S."/>
            <person name="Shinozaki K."/>
            <person name="Davis R.W."/>
            <person name="Theologis A."/>
            <person name="Ecker J.R."/>
        </authorList>
    </citation>
    <scope>NUCLEOTIDE SEQUENCE [LARGE SCALE MRNA]</scope>
    <source>
        <strain>cv. Columbia</strain>
    </source>
</reference>
<reference key="5">
    <citation type="submission" date="2002-03" db="EMBL/GenBank/DDBJ databases">
        <title>Full-length cDNA from Arabidopsis thaliana.</title>
        <authorList>
            <person name="Brover V.V."/>
            <person name="Troukhan M.E."/>
            <person name="Alexandrov N.A."/>
            <person name="Lu Y.-P."/>
            <person name="Flavell R.B."/>
            <person name="Feldmann K.A."/>
        </authorList>
    </citation>
    <scope>NUCLEOTIDE SEQUENCE [LARGE SCALE MRNA]</scope>
</reference>
<reference key="6">
    <citation type="journal article" date="1984" name="Physiol. Plantarum">
        <title>The growth and gravitropic responses of wild-type and auxin-resistant mutants of Arabidopsis thaliana.</title>
        <authorList>
            <person name="Mirza J.I."/>
            <person name="Olsen G.M."/>
            <person name="Iversen T.-H."/>
            <person name="Maher E.P."/>
        </authorList>
    </citation>
    <scope>FUNCTION</scope>
</reference>
<reference key="7">
    <citation type="journal article" date="1990" name="Plant Physiol.">
        <title>The aux1 mutation of Arabidopsis confers both auxin and ethylene resistance.</title>
        <authorList>
            <person name="Pickett F.B."/>
            <person name="Wilson A.K."/>
            <person name="Estelle M.A."/>
        </authorList>
    </citation>
    <scope>FUNCTION</scope>
</reference>
<reference key="8">
    <citation type="journal article" date="1990" name="Science">
        <title>Reversible root tip rotation in Arabidopsis seedlings induced by obstacle-touching stimulus.</title>
        <authorList>
            <person name="Okada K."/>
            <person name="Shimura Y."/>
        </authorList>
    </citation>
    <scope>FUNCTION</scope>
</reference>
<reference key="9">
    <citation type="journal article" date="1993" name="Plant Physiol.">
        <title>Ammonium inhibition of Arabidopsis root growth can be reversed by potassium and by auxin resistance mutations aux1, axr1, and axr2.</title>
        <authorList>
            <person name="Cao Y."/>
            <person name="Glass A.D.M."/>
            <person name="Crawford N.M."/>
        </authorList>
    </citation>
    <scope>FUNCTION</scope>
</reference>
<reference key="10">
    <citation type="journal article" date="1994" name="Planta">
        <title>Responses of Arabidopsis roots to auxin studied with high temporal resolution: comparison of wild type and auxin-response mutants.</title>
        <authorList>
            <person name="Evans M.L."/>
            <person name="Ishikawa H."/>
            <person name="Estelle M.A."/>
        </authorList>
    </citation>
    <scope>FUNCTION</scope>
</reference>
<reference key="11">
    <citation type="journal article" date="1995" name="Plant J.">
        <title>The AXR1 and AUX1 genes of Arabidopsis function in separate auxin-response pathways.</title>
        <authorList>
            <person name="Timpte C."/>
            <person name="Lincoln C."/>
            <person name="Pickett F.B."/>
            <person name="Turner J."/>
            <person name="Estelle M.A."/>
        </authorList>
    </citation>
    <scope>FUNCTION</scope>
</reference>
<reference key="12">
    <citation type="journal article" date="1995" name="Genetics">
        <title>Genetic analysis of ethylene signal transduction in Arabidopsis thaliana: five novel mutant loci integrated into a stress response pathway.</title>
        <authorList>
            <person name="Roman G."/>
            <person name="Lubarsky B."/>
            <person name="Kieber J.J."/>
            <person name="Rothenberg M."/>
            <person name="Ecker J.R."/>
        </authorList>
    </citation>
    <scope>FUNCTION</scope>
</reference>
<reference key="13">
    <citation type="journal article" date="1996" name="Plant Cell Physiol.">
        <title>Genetic analysis of the effects of polar auxin transport inhibitors on root growth in Arabidopsis thaliana.</title>
        <authorList>
            <person name="Fujita H."/>
            <person name="Syono K."/>
        </authorList>
    </citation>
    <scope>FUNCTION</scope>
</reference>
<reference key="14">
    <citation type="journal article" date="1998" name="Plant Cell Physiol.">
        <title>Differential effects of 1-naphthaleneacetic acid, indole-3-acetic acid and 2,4-dichlorophenoxyacetic acid on the gravitropic response of roots in an auxin-resistant mutant of Arabidopsis, aux1.</title>
        <authorList>
            <person name="Yamamoto M."/>
            <person name="Yamamoto K.T."/>
        </authorList>
    </citation>
    <scope>FUNCTION</scope>
</reference>
<reference key="15">
    <citation type="journal article" date="1998" name="Plant J.">
        <title>Auxin and ethylene promote root hair elongation in Arabidopsis.</title>
        <authorList>
            <person name="Pitts R.J."/>
            <person name="Cernac A."/>
            <person name="Estelle M.A."/>
        </authorList>
    </citation>
    <scope>FUNCTION</scope>
</reference>
<reference key="16">
    <citation type="journal article" date="1998" name="Plant Mol. Biol.">
        <title>The Arabidopsis AUX1 gene: a model system to study mRNA processing in plants.</title>
        <authorList>
            <person name="Marchant A."/>
            <person name="Bennett M.J."/>
        </authorList>
    </citation>
    <scope>FUNCTION</scope>
    <scope>MUTAGENESIS OF GLY-79; GLY-247 AND ALA-272</scope>
</reference>
<reference key="17">
    <citation type="journal article" date="1999" name="EMBO J.">
        <title>AUX1 regulates root gravitropism in Arabidopsis by facilitating auxin uptake within root apical tissues.</title>
        <authorList>
            <person name="Marchant A."/>
            <person name="Kargul J."/>
            <person name="May S.T."/>
            <person name="Muller P."/>
            <person name="Delbarre A."/>
            <person name="Perrot-Rechenmann C."/>
            <person name="Bennett M.J."/>
        </authorList>
    </citation>
    <scope>FUNCTION</scope>
    <scope>TISSUE SPECIFICITY</scope>
</reference>
<reference key="18">
    <citation type="journal article" date="2001" name="J. Plant Growth Regul.">
        <title>Quick on the uptake: characterization of a family of plant auxin influx carriers.</title>
        <authorList>
            <person name="Parry P.G."/>
            <person name="Marchant A."/>
            <person name="May S.T."/>
            <person name="Swarup R."/>
            <person name="Swarup K."/>
            <person name="James N."/>
            <person name="Graham N."/>
            <person name="Allen T."/>
            <person name="Martucci T."/>
            <person name="Yemm A."/>
            <person name="Napier R."/>
            <person name="Manning K."/>
            <person name="King G."/>
            <person name="Bennett M.J."/>
        </authorList>
    </citation>
    <scope>FUNCTION</scope>
    <scope>GENE FAMILY</scope>
    <scope>NOMENCLATURE</scope>
</reference>
<reference key="19">
    <citation type="journal article" date="2001" name="Plant Cell Physiol.">
        <title>Auxin is a positive regulator for ethylene-mediated response in the growth of Arabidopsis roots.</title>
        <authorList>
            <person name="Rahman A."/>
            <person name="Amakawa T."/>
            <person name="Goto N."/>
            <person name="Tsurumi S."/>
        </authorList>
    </citation>
    <scope>FUNCTION</scope>
</reference>
<reference key="20">
    <citation type="journal article" date="2001" name="Genes Dev.">
        <title>Localization of the auxin permease AUX1 suggests two functionally distinct hormone transport pathways operate in the Arabidopsis root apex.</title>
        <authorList>
            <person name="Swarup R."/>
            <person name="Friml J."/>
            <person name="Marchant A."/>
            <person name="Ljung K."/>
            <person name="Sandberg G."/>
            <person name="Palme K."/>
            <person name="Bennett M.J."/>
        </authorList>
    </citation>
    <scope>FUNCTION</scope>
    <scope>SUBCELLULAR LOCATION</scope>
    <scope>TISSUE SPECIFICITY</scope>
</reference>
<reference key="21">
    <citation type="journal article" date="2001" name="Plant J.">
        <title>Novel auxin transport inhibitors phenocopy the auxin influx carrier mutation aux1.</title>
        <authorList>
            <person name="Parry G."/>
            <person name="Delbarre A."/>
            <person name="Marchant A."/>
            <person name="Swarup R."/>
            <person name="Napier R."/>
            <person name="Perrot-Rechenmann C."/>
            <person name="Bennett M.J."/>
        </authorList>
    </citation>
    <scope>FUNCTION</scope>
    <scope>ACTIVITY REGULATION</scope>
</reference>
<reference key="22">
    <citation type="journal article" date="2001" name="Plant Physiol.">
        <title>Chromosaponin I specifically interacts with AUX1 protein in regulating the gravitropic response of Arabidopsis roots.</title>
        <authorList>
            <person name="Rahman A."/>
            <person name="Ahamed A."/>
            <person name="Amakawa T."/>
            <person name="Goto N."/>
            <person name="Tsurumi S."/>
        </authorList>
    </citation>
    <scope>ACTIVITY REGULATION</scope>
</reference>
<reference key="23">
    <citation type="journal article" date="2002" name="Curr. Biol.">
        <title>Cell polarity signaling in Arabidopsis involves a BFA-sensitive auxin influx pathway.</title>
        <authorList>
            <person name="Grebe M."/>
            <person name="Friml J."/>
            <person name="Swarup R."/>
            <person name="Ljung K."/>
            <person name="Sandberg G."/>
            <person name="Terlou M."/>
            <person name="Palme K."/>
            <person name="Bennett M.J."/>
            <person name="Scheres B."/>
        </authorList>
    </citation>
    <scope>FUNCTION</scope>
    <scope>SUBCELLULAR LOCATION</scope>
</reference>
<reference key="24">
    <citation type="journal article" date="2002" name="Plant Physiol.">
        <title>Auxin and ethylene response interactions during Arabidopsis root hair development dissected by auxin influx modulators.</title>
        <authorList>
            <person name="Rahman A."/>
            <person name="Hosokawa S."/>
            <person name="Oono Y."/>
            <person name="Amakawa T."/>
            <person name="Goto N."/>
            <person name="Tsurumi S."/>
        </authorList>
    </citation>
    <scope>FUNCTION</scope>
</reference>
<reference key="25">
    <citation type="journal article" date="2002" name="Plant Cell">
        <title>AUX1 promotes lateral root formation by facilitating indole-3-acetic acid distribution between sink and source tissues in the Arabidopsis seedling.</title>
        <authorList>
            <person name="Marchant A."/>
            <person name="Bhalerao R."/>
            <person name="Casimiro I."/>
            <person name="Ekloef J."/>
            <person name="Casero P.J."/>
            <person name="Bennett M.J."/>
            <person name="Sandberg G."/>
        </authorList>
    </citation>
    <scope>FUNCTION</scope>
    <scope>DEVELOPMENTAL STAGE</scope>
</reference>
<reference key="26">
    <citation type="journal article" date="2004" name="Plant Cell">
        <title>Structure-function analysis of the presumptive Arabidopsis auxin permease AUX1.</title>
        <authorList>
            <person name="Swarup R."/>
            <person name="Kargul J."/>
            <person name="Marchant A."/>
            <person name="Zadik D."/>
            <person name="Rahman A."/>
            <person name="Mills R."/>
            <person name="Yemm A."/>
            <person name="May S."/>
            <person name="Williams L."/>
            <person name="Millner P."/>
            <person name="Tsurumi S."/>
            <person name="Moore I."/>
            <person name="Napier R."/>
            <person name="Kerr I.D."/>
            <person name="Bennett M.J."/>
        </authorList>
    </citation>
    <scope>FUNCTION</scope>
    <scope>TOPOLOGY</scope>
    <scope>SUBCELLULAR LOCATION</scope>
    <scope>MUTAGENESIS OF SER-57; GLY-178; SER-215; GLY-238; ALA-250; MET-259; PRO-262; GLY-292; MET-305; THR-325; SER-386 AND GLY-439</scope>
</reference>